<keyword id="KW-0027">Amidation</keyword>
<keyword id="KW-0903">Direct protein sequencing</keyword>
<keyword id="KW-0527">Neuropeptide</keyword>
<keyword id="KW-0964">Secreted</keyword>
<dbReference type="GO" id="GO:0005576">
    <property type="term" value="C:extracellular region"/>
    <property type="evidence" value="ECO:0007669"/>
    <property type="project" value="UniProtKB-SubCell"/>
</dbReference>
<dbReference type="GO" id="GO:0007218">
    <property type="term" value="P:neuropeptide signaling pathway"/>
    <property type="evidence" value="ECO:0007669"/>
    <property type="project" value="UniProtKB-KW"/>
</dbReference>
<comment type="function">
    <text>Increases the rate and amplitude of spontaneous contractions of semi-isolated hearts. Increases the amplitude of excitatory postsynaptic potentials in abdominal extensor muscle.</text>
</comment>
<comment type="subcellular location">
    <subcellularLocation>
        <location>Secreted</location>
    </subcellularLocation>
</comment>
<comment type="similarity">
    <text evidence="2">Belongs to the FARP (FMRFamide related peptide) family.</text>
</comment>
<reference key="1">
    <citation type="journal article" date="1993" name="Peptides">
        <title>Isolation of two FMRFamide-related peptides from crayfish pericardial organs.</title>
        <authorList>
            <person name="Mercier A.J."/>
            <person name="Orchard I."/>
            <person name="Tebrugge V."/>
            <person name="Skerrett M."/>
        </authorList>
    </citation>
    <scope>PROTEIN SEQUENCE</scope>
    <scope>AMIDATION AT PHE-7</scope>
    <source>
        <tissue>Pericardial organs</tissue>
    </source>
</reference>
<feature type="peptide" id="PRO_0000043705" description="Cardio-excitatory FMRFamide homolog DF2">
    <location>
        <begin position="1"/>
        <end position="7"/>
    </location>
</feature>
<feature type="modified residue" description="Phenylalanine amide" evidence="1">
    <location>
        <position position="7"/>
    </location>
</feature>
<organism>
    <name type="scientific">Procambarus clarkii</name>
    <name type="common">Red swamp crayfish</name>
    <dbReference type="NCBI Taxonomy" id="6728"/>
    <lineage>
        <taxon>Eukaryota</taxon>
        <taxon>Metazoa</taxon>
        <taxon>Ecdysozoa</taxon>
        <taxon>Arthropoda</taxon>
        <taxon>Crustacea</taxon>
        <taxon>Multicrustacea</taxon>
        <taxon>Malacostraca</taxon>
        <taxon>Eumalacostraca</taxon>
        <taxon>Eucarida</taxon>
        <taxon>Decapoda</taxon>
        <taxon>Pleocyemata</taxon>
        <taxon>Astacidea</taxon>
        <taxon>Astacoidea</taxon>
        <taxon>Cambaridae</taxon>
        <taxon>Procambarus</taxon>
    </lineage>
</organism>
<evidence type="ECO:0000269" key="1">
    <source>
    </source>
</evidence>
<evidence type="ECO:0000305" key="2"/>
<proteinExistence type="evidence at protein level"/>
<protein>
    <recommendedName>
        <fullName>Cardio-excitatory FMRFamide homolog DF2</fullName>
    </recommendedName>
</protein>
<sequence>DRNFLRF</sequence>
<name>FAR2_PROCL</name>
<accession>P38498</accession>